<accession>Q99JU7</accession>
<accession>Q923E3</accession>
<name>BNIPL_MOUSE</name>
<gene>
    <name type="primary">Bnipl</name>
</gene>
<sequence>MKLGELELREEWQDEEFPRLLPEEPGSPGDPEDPQRGSQAGTPSSLALCGQRPMRKRLSAPEWQLSLTEGTGENGASPTRSASSSSAGSLDLEVDELETPSDSEQLDSGHEFEWEDDLPRAEGLGASEAAERLGRGCVCDVAGEDGHRWRVFRTGQREQRVDMTIIEPYKKVLSHGGYHGDGLNAVILFASCYLPRSSIPNYTYIMEHLFRYMVGTLELLVAENYLLVHLSGGTSRAQVPPLSWIRQCYRTLDRRLRKNLRALVVVHATWYVKAFLALVRPFISSKFTRKIRFLDSLGELAQLISLEQVHIPEVVRQLDRDLHGSKGT</sequence>
<evidence type="ECO:0000250" key="1"/>
<evidence type="ECO:0000255" key="2">
    <source>
        <dbReference type="PROSITE-ProRule" id="PRU00056"/>
    </source>
</evidence>
<evidence type="ECO:0000256" key="3">
    <source>
        <dbReference type="SAM" id="MobiDB-lite"/>
    </source>
</evidence>
<comment type="function">
    <text>May be a bridge molecule between BCL2 and ARHGAP1/CDC42 in promoting cell death.</text>
</comment>
<comment type="subunit">
    <text evidence="1">Homodimer. Interacts with BCL2, ARHGAP1, MIF and GFER (By similarity).</text>
</comment>
<keyword id="KW-0053">Apoptosis</keyword>
<keyword id="KW-1185">Reference proteome</keyword>
<dbReference type="EMBL" id="BC005659">
    <property type="protein sequence ID" value="AAH05659.1"/>
    <property type="molecule type" value="mRNA"/>
</dbReference>
<dbReference type="EMBL" id="BC006585">
    <property type="protein sequence ID" value="AAH06585.1"/>
    <property type="molecule type" value="mRNA"/>
</dbReference>
<dbReference type="FunCoup" id="Q99JU7">
    <property type="interactions" value="794"/>
</dbReference>
<dbReference type="STRING" id="10090.ENSMUSP00000102813"/>
<dbReference type="GlyGen" id="Q99JU7">
    <property type="glycosylation" value="1 site"/>
</dbReference>
<dbReference type="iPTMnet" id="Q99JU7"/>
<dbReference type="PhosphoSitePlus" id="Q99JU7"/>
<dbReference type="PaxDb" id="10090-ENSMUSP00000102813"/>
<dbReference type="ProteomicsDB" id="273791"/>
<dbReference type="Antibodypedia" id="20308">
    <property type="antibodies" value="107 antibodies from 22 providers"/>
</dbReference>
<dbReference type="Ensembl" id="ENSMUST00000137250.9">
    <property type="protein sequence ID" value="ENSMUSP00000115197.3"/>
    <property type="gene ID" value="ENSMUSG00000028115.17"/>
</dbReference>
<dbReference type="AGR" id="MGI:2384749"/>
<dbReference type="MGI" id="MGI:2384749">
    <property type="gene designation" value="Bnipl"/>
</dbReference>
<dbReference type="VEuPathDB" id="HostDB:ENSMUSG00000028115"/>
<dbReference type="eggNOG" id="ENOG502QUPS">
    <property type="taxonomic scope" value="Eukaryota"/>
</dbReference>
<dbReference type="GeneTree" id="ENSGT00940000161723"/>
<dbReference type="HOGENOM" id="CLU_039135_1_0_1"/>
<dbReference type="InParanoid" id="Q99JU7"/>
<dbReference type="PhylomeDB" id="Q99JU7"/>
<dbReference type="PRO" id="PR:Q99JU7"/>
<dbReference type="Proteomes" id="UP000000589">
    <property type="component" value="Chromosome 3"/>
</dbReference>
<dbReference type="RNAct" id="Q99JU7">
    <property type="molecule type" value="protein"/>
</dbReference>
<dbReference type="Bgee" id="ENSMUSG00000028115">
    <property type="expression patterns" value="Expressed in lip and 54 other cell types or tissues"/>
</dbReference>
<dbReference type="ExpressionAtlas" id="Q99JU7">
    <property type="expression patterns" value="baseline and differential"/>
</dbReference>
<dbReference type="GO" id="GO:0006915">
    <property type="term" value="P:apoptotic process"/>
    <property type="evidence" value="ECO:0000266"/>
    <property type="project" value="MGI"/>
</dbReference>
<dbReference type="CDD" id="cd00170">
    <property type="entry name" value="SEC14"/>
    <property type="match status" value="1"/>
</dbReference>
<dbReference type="FunFam" id="3.40.525.10:FF:000012">
    <property type="entry name" value="bcl-2/adenovirus E1B 19 kDa-interacting protein 2-like protein"/>
    <property type="match status" value="1"/>
</dbReference>
<dbReference type="Gene3D" id="3.40.525.10">
    <property type="entry name" value="CRAL-TRIO lipid binding domain"/>
    <property type="match status" value="1"/>
</dbReference>
<dbReference type="InterPro" id="IPR022181">
    <property type="entry name" value="Bcl2-/adenovirus-E1B"/>
</dbReference>
<dbReference type="InterPro" id="IPR001251">
    <property type="entry name" value="CRAL-TRIO_dom"/>
</dbReference>
<dbReference type="InterPro" id="IPR036865">
    <property type="entry name" value="CRAL-TRIO_dom_sf"/>
</dbReference>
<dbReference type="PANTHER" id="PTHR12112:SF21">
    <property type="entry name" value="BCL-2_ADENOVIRUS E1B 19 KDA-INTERACTING PROTEIN 2-LIKE PROTEIN"/>
    <property type="match status" value="1"/>
</dbReference>
<dbReference type="PANTHER" id="PTHR12112">
    <property type="entry name" value="BNIP - RELATED"/>
    <property type="match status" value="1"/>
</dbReference>
<dbReference type="Pfam" id="PF12496">
    <property type="entry name" value="BNIP2"/>
    <property type="match status" value="1"/>
</dbReference>
<dbReference type="Pfam" id="PF13716">
    <property type="entry name" value="CRAL_TRIO_2"/>
    <property type="match status" value="1"/>
</dbReference>
<dbReference type="SMART" id="SM00516">
    <property type="entry name" value="SEC14"/>
    <property type="match status" value="1"/>
</dbReference>
<dbReference type="SUPFAM" id="SSF52087">
    <property type="entry name" value="CRAL/TRIO domain"/>
    <property type="match status" value="1"/>
</dbReference>
<dbReference type="PROSITE" id="PS50191">
    <property type="entry name" value="CRAL_TRIO"/>
    <property type="match status" value="1"/>
</dbReference>
<protein>
    <recommendedName>
        <fullName>Bcl-2/adenovirus E1B 19 kDa-interacting protein 2-like protein</fullName>
    </recommendedName>
</protein>
<proteinExistence type="evidence at transcript level"/>
<reference key="1">
    <citation type="journal article" date="2004" name="Genome Res.">
        <title>The status, quality, and expansion of the NIH full-length cDNA project: the Mammalian Gene Collection (MGC).</title>
        <authorList>
            <consortium name="The MGC Project Team"/>
        </authorList>
    </citation>
    <scope>NUCLEOTIDE SEQUENCE [LARGE SCALE MRNA]</scope>
    <source>
        <strain>Czech II</strain>
        <tissue>Mammary tumor</tissue>
    </source>
</reference>
<feature type="chain" id="PRO_0000210771" description="Bcl-2/adenovirus E1B 19 kDa-interacting protein 2-like protein">
    <location>
        <begin position="1"/>
        <end position="328"/>
    </location>
</feature>
<feature type="domain" description="CRAL-TRIO" evidence="2">
    <location>
        <begin position="162"/>
        <end position="323"/>
    </location>
</feature>
<feature type="region of interest" description="Disordered" evidence="3">
    <location>
        <begin position="1"/>
        <end position="116"/>
    </location>
</feature>
<feature type="compositionally biased region" description="Basic and acidic residues" evidence="3">
    <location>
        <begin position="1"/>
        <end position="22"/>
    </location>
</feature>
<feature type="compositionally biased region" description="Polar residues" evidence="3">
    <location>
        <begin position="36"/>
        <end position="45"/>
    </location>
</feature>
<feature type="compositionally biased region" description="Low complexity" evidence="3">
    <location>
        <begin position="76"/>
        <end position="89"/>
    </location>
</feature>
<feature type="compositionally biased region" description="Acidic residues" evidence="3">
    <location>
        <begin position="92"/>
        <end position="105"/>
    </location>
</feature>
<feature type="compositionally biased region" description="Basic and acidic residues" evidence="3">
    <location>
        <begin position="107"/>
        <end position="116"/>
    </location>
</feature>
<organism>
    <name type="scientific">Mus musculus</name>
    <name type="common">Mouse</name>
    <dbReference type="NCBI Taxonomy" id="10090"/>
    <lineage>
        <taxon>Eukaryota</taxon>
        <taxon>Metazoa</taxon>
        <taxon>Chordata</taxon>
        <taxon>Craniata</taxon>
        <taxon>Vertebrata</taxon>
        <taxon>Euteleostomi</taxon>
        <taxon>Mammalia</taxon>
        <taxon>Eutheria</taxon>
        <taxon>Euarchontoglires</taxon>
        <taxon>Glires</taxon>
        <taxon>Rodentia</taxon>
        <taxon>Myomorpha</taxon>
        <taxon>Muroidea</taxon>
        <taxon>Muridae</taxon>
        <taxon>Murinae</taxon>
        <taxon>Mus</taxon>
        <taxon>Mus</taxon>
    </lineage>
</organism>